<proteinExistence type="inferred from homology"/>
<sequence>MVSYKAFLITLAAVTRVLTYPANSSFELVDRSGTPSSTGTSGGYYYSFWTDGGADVTYTNGAGGEYKLQWSGNGNLVGGKGWNPGSAKAVTYSGTYSPNGNSYLSLYGWTTSPLIEYYVVENFGTYDPSTGATLKGTVVSDGATYKIYQTQRVNQPSIIGTATFYQYWSVRQTKRTGGTVTTGNHFNAWKALGMNMGTFDYMIVATEGYFSSGSSDITVGSSTGGGDSGSPTSAPTTSPTTSPGGTCGALYSQCGGTGFTGSQCCASGTCKYANSYYSQCL</sequence>
<organism>
    <name type="scientific">Botryotinia fuckeliana (strain B05.10)</name>
    <name type="common">Noble rot fungus</name>
    <name type="synonym">Botrytis cinerea</name>
    <dbReference type="NCBI Taxonomy" id="332648"/>
    <lineage>
        <taxon>Eukaryota</taxon>
        <taxon>Fungi</taxon>
        <taxon>Dikarya</taxon>
        <taxon>Ascomycota</taxon>
        <taxon>Pezizomycotina</taxon>
        <taxon>Leotiomycetes</taxon>
        <taxon>Helotiales</taxon>
        <taxon>Sclerotiniaceae</taxon>
        <taxon>Botrytis</taxon>
    </lineage>
</organism>
<evidence type="ECO:0000250" key="1">
    <source>
        <dbReference type="UniProtKB" id="B3VSG7"/>
    </source>
</evidence>
<evidence type="ECO:0000255" key="2"/>
<evidence type="ECO:0000255" key="3">
    <source>
        <dbReference type="PROSITE-ProRule" id="PRU00498"/>
    </source>
</evidence>
<evidence type="ECO:0000255" key="4">
    <source>
        <dbReference type="PROSITE-ProRule" id="PRU00597"/>
    </source>
</evidence>
<evidence type="ECO:0000255" key="5">
    <source>
        <dbReference type="PROSITE-ProRule" id="PRU01097"/>
    </source>
</evidence>
<evidence type="ECO:0000269" key="6">
    <source>
    </source>
</evidence>
<evidence type="ECO:0000303" key="7">
    <source>
    </source>
</evidence>
<keyword id="KW-0119">Carbohydrate metabolism</keyword>
<keyword id="KW-0325">Glycoprotein</keyword>
<keyword id="KW-0326">Glycosidase</keyword>
<keyword id="KW-0378">Hydrolase</keyword>
<keyword id="KW-0624">Polysaccharide degradation</keyword>
<keyword id="KW-1185">Reference proteome</keyword>
<keyword id="KW-0732">Signal</keyword>
<keyword id="KW-0858">Xylan degradation</keyword>
<feature type="signal peptide" evidence="2">
    <location>
        <begin position="1"/>
        <end position="19"/>
    </location>
</feature>
<feature type="chain" id="PRO_5017037566" description="Ethylene-inducing xylanase 1">
    <location>
        <begin position="20"/>
        <end position="281"/>
    </location>
</feature>
<feature type="domain" description="GH11" evidence="5">
    <location>
        <begin position="32"/>
        <end position="220"/>
    </location>
</feature>
<feature type="domain" description="CBM1" evidence="4">
    <location>
        <begin position="246"/>
        <end position="281"/>
    </location>
</feature>
<feature type="active site" description="Nucleophile" evidence="5">
    <location>
        <position position="116"/>
    </location>
</feature>
<feature type="active site" description="Proton donor" evidence="5">
    <location>
        <position position="207"/>
    </location>
</feature>
<feature type="glycosylation site" description="N-linked (GlcNAc...) asparagine" evidence="3">
    <location>
        <position position="23"/>
    </location>
</feature>
<dbReference type="EC" id="3.2.1.8" evidence="5"/>
<dbReference type="EMBL" id="CP009816">
    <property type="protein sequence ID" value="ATZ55410.1"/>
    <property type="molecule type" value="Genomic_DNA"/>
</dbReference>
<dbReference type="RefSeq" id="XP_001558008.1">
    <property type="nucleotide sequence ID" value="XM_001557958.2"/>
</dbReference>
<dbReference type="EnsemblFungi" id="Bcin12g00090.1">
    <property type="protein sequence ID" value="Bcin12p00090.1"/>
    <property type="gene ID" value="Bcin12g00090"/>
</dbReference>
<dbReference type="GeneID" id="5438613"/>
<dbReference type="KEGG" id="bfu:BCIN_12g00090"/>
<dbReference type="VEuPathDB" id="FungiDB:Bcin12g00090"/>
<dbReference type="OMA" id="PLECNGF"/>
<dbReference type="OrthoDB" id="2115822at2759"/>
<dbReference type="UniPathway" id="UPA00114"/>
<dbReference type="Proteomes" id="UP000001798">
    <property type="component" value="Chromosome bcin12"/>
</dbReference>
<dbReference type="GO" id="GO:0005576">
    <property type="term" value="C:extracellular region"/>
    <property type="evidence" value="ECO:0007669"/>
    <property type="project" value="InterPro"/>
</dbReference>
<dbReference type="GO" id="GO:0030248">
    <property type="term" value="F:cellulose binding"/>
    <property type="evidence" value="ECO:0007669"/>
    <property type="project" value="InterPro"/>
</dbReference>
<dbReference type="GO" id="GO:0031176">
    <property type="term" value="F:endo-1,4-beta-xylanase activity"/>
    <property type="evidence" value="ECO:0007669"/>
    <property type="project" value="UniProtKB-UniRule"/>
</dbReference>
<dbReference type="GO" id="GO:0045493">
    <property type="term" value="P:xylan catabolic process"/>
    <property type="evidence" value="ECO:0007669"/>
    <property type="project" value="UniProtKB-UniRule"/>
</dbReference>
<dbReference type="FunFam" id="2.60.120.180:FF:000001">
    <property type="entry name" value="Endo-1,4-beta-xylanase"/>
    <property type="match status" value="1"/>
</dbReference>
<dbReference type="Gene3D" id="2.60.120.180">
    <property type="match status" value="1"/>
</dbReference>
<dbReference type="InterPro" id="IPR035971">
    <property type="entry name" value="CBD_sf"/>
</dbReference>
<dbReference type="InterPro" id="IPR000254">
    <property type="entry name" value="Cellulose-bd_dom_fun"/>
</dbReference>
<dbReference type="InterPro" id="IPR013320">
    <property type="entry name" value="ConA-like_dom_sf"/>
</dbReference>
<dbReference type="InterPro" id="IPR013319">
    <property type="entry name" value="GH11/12"/>
</dbReference>
<dbReference type="InterPro" id="IPR018208">
    <property type="entry name" value="GH11_AS_1"/>
</dbReference>
<dbReference type="InterPro" id="IPR033119">
    <property type="entry name" value="GH11_AS_2"/>
</dbReference>
<dbReference type="InterPro" id="IPR033123">
    <property type="entry name" value="GH11_dom"/>
</dbReference>
<dbReference type="InterPro" id="IPR001137">
    <property type="entry name" value="Glyco_hydro_11"/>
</dbReference>
<dbReference type="PANTHER" id="PTHR46828">
    <property type="entry name" value="ENDO-1,4-BETA-XYLANASE A-RELATED"/>
    <property type="match status" value="1"/>
</dbReference>
<dbReference type="PANTHER" id="PTHR46828:SF2">
    <property type="entry name" value="ENDO-1,4-BETA-XYLANASE A-RELATED"/>
    <property type="match status" value="1"/>
</dbReference>
<dbReference type="Pfam" id="PF00734">
    <property type="entry name" value="CBM_1"/>
    <property type="match status" value="1"/>
</dbReference>
<dbReference type="Pfam" id="PF00457">
    <property type="entry name" value="Glyco_hydro_11"/>
    <property type="match status" value="1"/>
</dbReference>
<dbReference type="PRINTS" id="PR00911">
    <property type="entry name" value="GLHYDRLASE11"/>
</dbReference>
<dbReference type="SMART" id="SM00236">
    <property type="entry name" value="fCBD"/>
    <property type="match status" value="1"/>
</dbReference>
<dbReference type="SUPFAM" id="SSF57180">
    <property type="entry name" value="Cellulose-binding domain"/>
    <property type="match status" value="1"/>
</dbReference>
<dbReference type="SUPFAM" id="SSF49899">
    <property type="entry name" value="Concanavalin A-like lectins/glucanases"/>
    <property type="match status" value="1"/>
</dbReference>
<dbReference type="PROSITE" id="PS00562">
    <property type="entry name" value="CBM1_1"/>
    <property type="match status" value="1"/>
</dbReference>
<dbReference type="PROSITE" id="PS51164">
    <property type="entry name" value="CBM1_2"/>
    <property type="match status" value="1"/>
</dbReference>
<dbReference type="PROSITE" id="PS00776">
    <property type="entry name" value="GH11_1"/>
    <property type="match status" value="1"/>
</dbReference>
<dbReference type="PROSITE" id="PS00777">
    <property type="entry name" value="GH11_2"/>
    <property type="match status" value="1"/>
</dbReference>
<dbReference type="PROSITE" id="PS51761">
    <property type="entry name" value="GH11_3"/>
    <property type="match status" value="1"/>
</dbReference>
<name>EIX1_BOTFB</name>
<comment type="function">
    <text evidence="1 6">Endo-1,4-beta-xylanase involved in the hydrolysis of xylan, a major structural heterogeneous polysaccharide found in plant biomass representing the second most abundant polysaccharide in the biosphere, after cellulose (By similarity). May act as an elicitor of plant defense responses in certain plants but does not exhibit any cell death when transiently expressed in N.benthamiana (PubMed:33205907).</text>
</comment>
<comment type="catalytic activity">
    <reaction evidence="5">
        <text>Endohydrolysis of (1-&gt;4)-beta-D-xylosidic linkages in xylans.</text>
        <dbReference type="EC" id="3.2.1.8"/>
    </reaction>
</comment>
<comment type="pathway">
    <text evidence="5">Glycan degradation; xylan degradation.</text>
</comment>
<comment type="similarity">
    <text evidence="5">Belongs to the glycosyl hydrolase 11 (cellulase G) family.</text>
</comment>
<reference key="1">
    <citation type="journal article" date="2011" name="PLoS Genet.">
        <title>Genomic analysis of the necrotrophic fungal pathogens Sclerotinia sclerotiorum and Botrytis cinerea.</title>
        <authorList>
            <person name="Amselem J."/>
            <person name="Cuomo C.A."/>
            <person name="van Kan J.A.L."/>
            <person name="Viaud M."/>
            <person name="Benito E.P."/>
            <person name="Couloux A."/>
            <person name="Coutinho P.M."/>
            <person name="de Vries R.P."/>
            <person name="Dyer P.S."/>
            <person name="Fillinger S."/>
            <person name="Fournier E."/>
            <person name="Gout L."/>
            <person name="Hahn M."/>
            <person name="Kohn L."/>
            <person name="Lapalu N."/>
            <person name="Plummer K.M."/>
            <person name="Pradier J.-M."/>
            <person name="Quevillon E."/>
            <person name="Sharon A."/>
            <person name="Simon A."/>
            <person name="ten Have A."/>
            <person name="Tudzynski B."/>
            <person name="Tudzynski P."/>
            <person name="Wincker P."/>
            <person name="Andrew M."/>
            <person name="Anthouard V."/>
            <person name="Beever R.E."/>
            <person name="Beffa R."/>
            <person name="Benoit I."/>
            <person name="Bouzid O."/>
            <person name="Brault B."/>
            <person name="Chen Z."/>
            <person name="Choquer M."/>
            <person name="Collemare J."/>
            <person name="Cotton P."/>
            <person name="Danchin E.G."/>
            <person name="Da Silva C."/>
            <person name="Gautier A."/>
            <person name="Giraud C."/>
            <person name="Giraud T."/>
            <person name="Gonzalez C."/>
            <person name="Grossetete S."/>
            <person name="Gueldener U."/>
            <person name="Henrissat B."/>
            <person name="Howlett B.J."/>
            <person name="Kodira C."/>
            <person name="Kretschmer M."/>
            <person name="Lappartient A."/>
            <person name="Leroch M."/>
            <person name="Levis C."/>
            <person name="Mauceli E."/>
            <person name="Neuveglise C."/>
            <person name="Oeser B."/>
            <person name="Pearson M."/>
            <person name="Poulain J."/>
            <person name="Poussereau N."/>
            <person name="Quesneville H."/>
            <person name="Rascle C."/>
            <person name="Schumacher J."/>
            <person name="Segurens B."/>
            <person name="Sexton A."/>
            <person name="Silva E."/>
            <person name="Sirven C."/>
            <person name="Soanes D.M."/>
            <person name="Talbot N.J."/>
            <person name="Templeton M."/>
            <person name="Yandava C."/>
            <person name="Yarden O."/>
            <person name="Zeng Q."/>
            <person name="Rollins J.A."/>
            <person name="Lebrun M.-H."/>
            <person name="Dickman M."/>
        </authorList>
    </citation>
    <scope>NUCLEOTIDE SEQUENCE [LARGE SCALE GENOMIC DNA]</scope>
    <source>
        <strain>B05.10</strain>
    </source>
</reference>
<reference key="2">
    <citation type="journal article" date="2012" name="Eukaryot. Cell">
        <title>Genome update of Botrytis cinerea strains B05.10 and T4.</title>
        <authorList>
            <person name="Staats M."/>
            <person name="van Kan J.A.L."/>
        </authorList>
    </citation>
    <scope>NUCLEOTIDE SEQUENCE [LARGE SCALE GENOMIC DNA]</scope>
    <scope>GENOME REANNOTATION</scope>
    <source>
        <strain>B05.10</strain>
    </source>
</reference>
<reference key="3">
    <citation type="journal article" date="2017" name="Mol. Plant Pathol.">
        <title>A gapless genome sequence of the fungus Botrytis cinerea.</title>
        <authorList>
            <person name="van Kan J.A.L."/>
            <person name="Stassen J.H.M."/>
            <person name="Mosbach A."/>
            <person name="van der Lee T.A.J."/>
            <person name="Faino L."/>
            <person name="Farmer A.D."/>
            <person name="Papasotiriou D.G."/>
            <person name="Zhou S."/>
            <person name="Seidl M.F."/>
            <person name="Cottam E."/>
            <person name="Edel D."/>
            <person name="Hahn M."/>
            <person name="Schwartz D.C."/>
            <person name="Dietrich R.A."/>
            <person name="Widdison S."/>
            <person name="Scalliet G."/>
        </authorList>
    </citation>
    <scope>NUCLEOTIDE SEQUENCE [LARGE SCALE GENOMIC DNA]</scope>
    <scope>GENOME REANNOTATION</scope>
    <source>
        <strain>B05.10</strain>
    </source>
</reference>
<reference key="4">
    <citation type="journal article" date="2021" name="J. Integr. Plant Biol.">
        <title>Nicotiana benthamiana LRR-RLP NbEIX2 mediates the perception of an EIX-like protein from Verticillium dahliae.</title>
        <authorList>
            <person name="Yin Z."/>
            <person name="Wang N."/>
            <person name="Pi L."/>
            <person name="Li L."/>
            <person name="Duan W."/>
            <person name="Wang X."/>
            <person name="Dou D."/>
        </authorList>
    </citation>
    <scope>FUNCTION</scope>
</reference>
<accession>A0A384JXV5</accession>
<protein>
    <recommendedName>
        <fullName evidence="7">Ethylene-inducing xylanase 1</fullName>
        <shortName evidence="7">EIX1</shortName>
        <ecNumber evidence="5">3.2.1.8</ecNumber>
    </recommendedName>
    <alternativeName>
        <fullName evidence="7">Endo-1,4-beta-xylanase EIX1</fullName>
    </alternativeName>
</protein>
<gene>
    <name evidence="7" type="primary">EIX1</name>
    <name type="ORF">BCIN_12g00090</name>
</gene>